<keyword id="KW-0963">Cytoplasm</keyword>
<keyword id="KW-0456">Lyase</keyword>
<keyword id="KW-0704">Schiff base</keyword>
<protein>
    <recommendedName>
        <fullName evidence="1">Deoxyribose-phosphate aldolase</fullName>
        <shortName evidence="1">DERA</shortName>
        <ecNumber evidence="1">4.1.2.4</ecNumber>
    </recommendedName>
    <alternativeName>
        <fullName evidence="1">2-deoxy-D-ribose 5-phosphate aldolase</fullName>
    </alternativeName>
    <alternativeName>
        <fullName evidence="1">Phosphodeoxyriboaldolase</fullName>
        <shortName evidence="1">Deoxyriboaldolase</shortName>
    </alternativeName>
</protein>
<gene>
    <name evidence="1" type="primary">deoC</name>
    <name type="ordered locus">BAMEG_2700</name>
</gene>
<organism>
    <name type="scientific">Bacillus anthracis (strain CDC 684 / NRRL 3495)</name>
    <dbReference type="NCBI Taxonomy" id="568206"/>
    <lineage>
        <taxon>Bacteria</taxon>
        <taxon>Bacillati</taxon>
        <taxon>Bacillota</taxon>
        <taxon>Bacilli</taxon>
        <taxon>Bacillales</taxon>
        <taxon>Bacillaceae</taxon>
        <taxon>Bacillus</taxon>
        <taxon>Bacillus cereus group</taxon>
    </lineage>
</organism>
<dbReference type="EC" id="4.1.2.4" evidence="1"/>
<dbReference type="EMBL" id="CP001215">
    <property type="protein sequence ID" value="ACP14295.1"/>
    <property type="molecule type" value="Genomic_DNA"/>
</dbReference>
<dbReference type="RefSeq" id="WP_001017446.1">
    <property type="nucleotide sequence ID" value="NC_012581.1"/>
</dbReference>
<dbReference type="SMR" id="C3L6K8"/>
<dbReference type="GeneID" id="45021821"/>
<dbReference type="KEGG" id="bah:BAMEG_2700"/>
<dbReference type="HOGENOM" id="CLU_053595_0_1_9"/>
<dbReference type="UniPathway" id="UPA00002">
    <property type="reaction ID" value="UER00468"/>
</dbReference>
<dbReference type="GO" id="GO:0005737">
    <property type="term" value="C:cytoplasm"/>
    <property type="evidence" value="ECO:0007669"/>
    <property type="project" value="UniProtKB-SubCell"/>
</dbReference>
<dbReference type="GO" id="GO:0004139">
    <property type="term" value="F:deoxyribose-phosphate aldolase activity"/>
    <property type="evidence" value="ECO:0007669"/>
    <property type="project" value="UniProtKB-UniRule"/>
</dbReference>
<dbReference type="GO" id="GO:0006018">
    <property type="term" value="P:2-deoxyribose 1-phosphate catabolic process"/>
    <property type="evidence" value="ECO:0007669"/>
    <property type="project" value="UniProtKB-UniRule"/>
</dbReference>
<dbReference type="GO" id="GO:0016052">
    <property type="term" value="P:carbohydrate catabolic process"/>
    <property type="evidence" value="ECO:0007669"/>
    <property type="project" value="TreeGrafter"/>
</dbReference>
<dbReference type="GO" id="GO:0009264">
    <property type="term" value="P:deoxyribonucleotide catabolic process"/>
    <property type="evidence" value="ECO:0007669"/>
    <property type="project" value="InterPro"/>
</dbReference>
<dbReference type="CDD" id="cd00959">
    <property type="entry name" value="DeoC"/>
    <property type="match status" value="1"/>
</dbReference>
<dbReference type="FunFam" id="3.20.20.70:FF:000044">
    <property type="entry name" value="Deoxyribose-phosphate aldolase"/>
    <property type="match status" value="1"/>
</dbReference>
<dbReference type="Gene3D" id="3.20.20.70">
    <property type="entry name" value="Aldolase class I"/>
    <property type="match status" value="1"/>
</dbReference>
<dbReference type="HAMAP" id="MF_00114">
    <property type="entry name" value="DeoC_type1"/>
    <property type="match status" value="1"/>
</dbReference>
<dbReference type="InterPro" id="IPR013785">
    <property type="entry name" value="Aldolase_TIM"/>
</dbReference>
<dbReference type="InterPro" id="IPR011343">
    <property type="entry name" value="DeoC"/>
</dbReference>
<dbReference type="InterPro" id="IPR002915">
    <property type="entry name" value="DeoC/FbaB/LacD_aldolase"/>
</dbReference>
<dbReference type="InterPro" id="IPR028581">
    <property type="entry name" value="DeoC_typeI"/>
</dbReference>
<dbReference type="NCBIfam" id="TIGR00126">
    <property type="entry name" value="deoC"/>
    <property type="match status" value="1"/>
</dbReference>
<dbReference type="PANTHER" id="PTHR10889">
    <property type="entry name" value="DEOXYRIBOSE-PHOSPHATE ALDOLASE"/>
    <property type="match status" value="1"/>
</dbReference>
<dbReference type="PANTHER" id="PTHR10889:SF1">
    <property type="entry name" value="DEOXYRIBOSE-PHOSPHATE ALDOLASE"/>
    <property type="match status" value="1"/>
</dbReference>
<dbReference type="Pfam" id="PF01791">
    <property type="entry name" value="DeoC"/>
    <property type="match status" value="1"/>
</dbReference>
<dbReference type="PIRSF" id="PIRSF001357">
    <property type="entry name" value="DeoC"/>
    <property type="match status" value="1"/>
</dbReference>
<dbReference type="SMART" id="SM01133">
    <property type="entry name" value="DeoC"/>
    <property type="match status" value="1"/>
</dbReference>
<dbReference type="SUPFAM" id="SSF51569">
    <property type="entry name" value="Aldolase"/>
    <property type="match status" value="1"/>
</dbReference>
<comment type="function">
    <text evidence="1">Catalyzes a reversible aldol reaction between acetaldehyde and D-glyceraldehyde 3-phosphate to generate 2-deoxy-D-ribose 5-phosphate.</text>
</comment>
<comment type="catalytic activity">
    <reaction evidence="1">
        <text>2-deoxy-D-ribose 5-phosphate = D-glyceraldehyde 3-phosphate + acetaldehyde</text>
        <dbReference type="Rhea" id="RHEA:12821"/>
        <dbReference type="ChEBI" id="CHEBI:15343"/>
        <dbReference type="ChEBI" id="CHEBI:59776"/>
        <dbReference type="ChEBI" id="CHEBI:62877"/>
        <dbReference type="EC" id="4.1.2.4"/>
    </reaction>
</comment>
<comment type="pathway">
    <text evidence="1">Carbohydrate degradation; 2-deoxy-D-ribose 1-phosphate degradation; D-glyceraldehyde 3-phosphate and acetaldehyde from 2-deoxy-alpha-D-ribose 1-phosphate: step 2/2.</text>
</comment>
<comment type="subcellular location">
    <subcellularLocation>
        <location evidence="1">Cytoplasm</location>
    </subcellularLocation>
</comment>
<comment type="similarity">
    <text evidence="1">Belongs to the DeoC/FbaB aldolase family. DeoC type 1 subfamily.</text>
</comment>
<proteinExistence type="inferred from homology"/>
<feature type="chain" id="PRO_1000119168" description="Deoxyribose-phosphate aldolase">
    <location>
        <begin position="1"/>
        <end position="223"/>
    </location>
</feature>
<feature type="active site" description="Proton donor/acceptor" evidence="1">
    <location>
        <position position="89"/>
    </location>
</feature>
<feature type="active site" description="Schiff-base intermediate with acetaldehyde" evidence="1">
    <location>
        <position position="152"/>
    </location>
</feature>
<feature type="active site" description="Proton donor/acceptor" evidence="1">
    <location>
        <position position="181"/>
    </location>
</feature>
<name>DEOC_BACAC</name>
<accession>C3L6K8</accession>
<sequence>MNIAKLIDHTILKANTTKEDVMKVIEEAKEYKFASVCINPTWVKLAAEELAGHDVDVCTVIGFPLGASTTETKAFETKDAIAKGATEVDMVINVGALKDGDNELVEKDIYEVVQAAKGKALVKVIIETCLLTDEEKVRACELSVKAGADFVKTSTGFSTGGATAEDIALMRKTVGPNVGVKASGGVRTREDAEKMVAAGASRVGASASVAIVLNDAKGATDNY</sequence>
<reference key="1">
    <citation type="submission" date="2008-10" db="EMBL/GenBank/DDBJ databases">
        <title>Genome sequence of Bacillus anthracis str. CDC 684.</title>
        <authorList>
            <person name="Dodson R.J."/>
            <person name="Munk A.C."/>
            <person name="Brettin T."/>
            <person name="Bruce D."/>
            <person name="Detter C."/>
            <person name="Tapia R."/>
            <person name="Han C."/>
            <person name="Sutton G."/>
            <person name="Sims D."/>
        </authorList>
    </citation>
    <scope>NUCLEOTIDE SEQUENCE [LARGE SCALE GENOMIC DNA]</scope>
    <source>
        <strain>CDC 684 / NRRL 3495</strain>
    </source>
</reference>
<evidence type="ECO:0000255" key="1">
    <source>
        <dbReference type="HAMAP-Rule" id="MF_00114"/>
    </source>
</evidence>